<organism>
    <name type="scientific">Elusimicrobium minutum (strain Pei191)</name>
    <dbReference type="NCBI Taxonomy" id="445932"/>
    <lineage>
        <taxon>Bacteria</taxon>
        <taxon>Pseudomonadati</taxon>
        <taxon>Elusimicrobiota</taxon>
        <taxon>Elusimicrobia</taxon>
        <taxon>Elusimicrobiales</taxon>
        <taxon>Elusimicrobiaceae</taxon>
        <taxon>Elusimicrobium</taxon>
    </lineage>
</organism>
<evidence type="ECO:0000255" key="1">
    <source>
        <dbReference type="HAMAP-Rule" id="MF_01463"/>
    </source>
</evidence>
<proteinExistence type="inferred from homology"/>
<dbReference type="EMBL" id="CP001055">
    <property type="protein sequence ID" value="ACC98118.1"/>
    <property type="molecule type" value="Genomic_DNA"/>
</dbReference>
<dbReference type="RefSeq" id="WP_012414733.1">
    <property type="nucleotide sequence ID" value="NC_010644.1"/>
</dbReference>
<dbReference type="SMR" id="B2KBZ1"/>
<dbReference type="STRING" id="445932.Emin_0563"/>
<dbReference type="KEGG" id="emi:Emin_0563"/>
<dbReference type="HOGENOM" id="CLU_007894_4_2_0"/>
<dbReference type="Proteomes" id="UP000001029">
    <property type="component" value="Chromosome"/>
</dbReference>
<dbReference type="GO" id="GO:0005886">
    <property type="term" value="C:plasma membrane"/>
    <property type="evidence" value="ECO:0007669"/>
    <property type="project" value="UniProtKB-SubCell"/>
</dbReference>
<dbReference type="GO" id="GO:0015450">
    <property type="term" value="F:protein-transporting ATPase activity"/>
    <property type="evidence" value="ECO:0007669"/>
    <property type="project" value="InterPro"/>
</dbReference>
<dbReference type="GO" id="GO:0065002">
    <property type="term" value="P:intracellular protein transmembrane transport"/>
    <property type="evidence" value="ECO:0007669"/>
    <property type="project" value="UniProtKB-UniRule"/>
</dbReference>
<dbReference type="GO" id="GO:0006605">
    <property type="term" value="P:protein targeting"/>
    <property type="evidence" value="ECO:0007669"/>
    <property type="project" value="UniProtKB-UniRule"/>
</dbReference>
<dbReference type="GO" id="GO:0043952">
    <property type="term" value="P:protein transport by the Sec complex"/>
    <property type="evidence" value="ECO:0007669"/>
    <property type="project" value="UniProtKB-UniRule"/>
</dbReference>
<dbReference type="FunFam" id="1.20.1640.10:FF:000004">
    <property type="entry name" value="Protein translocase subunit SecD"/>
    <property type="match status" value="1"/>
</dbReference>
<dbReference type="Gene3D" id="3.30.1360.200">
    <property type="match status" value="1"/>
</dbReference>
<dbReference type="Gene3D" id="3.30.70.3400">
    <property type="match status" value="1"/>
</dbReference>
<dbReference type="Gene3D" id="1.20.1640.10">
    <property type="entry name" value="Multidrug efflux transporter AcrB transmembrane domain"/>
    <property type="match status" value="1"/>
</dbReference>
<dbReference type="HAMAP" id="MF_01463_B">
    <property type="entry name" value="SecD_B"/>
    <property type="match status" value="1"/>
</dbReference>
<dbReference type="InterPro" id="IPR001036">
    <property type="entry name" value="Acrflvin-R"/>
</dbReference>
<dbReference type="InterPro" id="IPR005791">
    <property type="entry name" value="SecD"/>
</dbReference>
<dbReference type="InterPro" id="IPR022813">
    <property type="entry name" value="SecD/SecF_arch_bac"/>
</dbReference>
<dbReference type="InterPro" id="IPR022646">
    <property type="entry name" value="SecD/SecF_CS"/>
</dbReference>
<dbReference type="InterPro" id="IPR048631">
    <property type="entry name" value="SecD_1st"/>
</dbReference>
<dbReference type="InterPro" id="IPR048634">
    <property type="entry name" value="SecD_SecF_C"/>
</dbReference>
<dbReference type="InterPro" id="IPR055344">
    <property type="entry name" value="SecD_SecF_C_bact"/>
</dbReference>
<dbReference type="InterPro" id="IPR054384">
    <property type="entry name" value="SecDF_P1_head"/>
</dbReference>
<dbReference type="NCBIfam" id="TIGR00916">
    <property type="entry name" value="2A0604s01"/>
    <property type="match status" value="1"/>
</dbReference>
<dbReference type="NCBIfam" id="TIGR01129">
    <property type="entry name" value="secD"/>
    <property type="match status" value="1"/>
</dbReference>
<dbReference type="PANTHER" id="PTHR30081:SF1">
    <property type="entry name" value="PROTEIN TRANSLOCASE SUBUNIT SECD"/>
    <property type="match status" value="1"/>
</dbReference>
<dbReference type="PANTHER" id="PTHR30081">
    <property type="entry name" value="PROTEIN-EXPORT MEMBRANE PROTEIN SEC"/>
    <property type="match status" value="1"/>
</dbReference>
<dbReference type="Pfam" id="PF07549">
    <property type="entry name" value="Sec_GG"/>
    <property type="match status" value="1"/>
</dbReference>
<dbReference type="Pfam" id="PF21760">
    <property type="entry name" value="SecD_1st"/>
    <property type="match status" value="1"/>
</dbReference>
<dbReference type="Pfam" id="PF02355">
    <property type="entry name" value="SecD_SecF_C"/>
    <property type="match status" value="1"/>
</dbReference>
<dbReference type="Pfam" id="PF22599">
    <property type="entry name" value="SecDF_P1_head"/>
    <property type="match status" value="1"/>
</dbReference>
<dbReference type="PRINTS" id="PR00702">
    <property type="entry name" value="ACRIFLAVINRP"/>
</dbReference>
<dbReference type="SUPFAM" id="SSF82866">
    <property type="entry name" value="Multidrug efflux transporter AcrB transmembrane domain"/>
    <property type="match status" value="1"/>
</dbReference>
<reference key="1">
    <citation type="journal article" date="2009" name="Appl. Environ. Microbiol.">
        <title>Genomic analysis of 'Elusimicrobium minutum,' the first cultivated representative of the phylum 'Elusimicrobia' (formerly termite group 1).</title>
        <authorList>
            <person name="Herlemann D.P.R."/>
            <person name="Geissinger O."/>
            <person name="Ikeda-Ohtsubo W."/>
            <person name="Kunin V."/>
            <person name="Sun H."/>
            <person name="Lapidus A."/>
            <person name="Hugenholtz P."/>
            <person name="Brune A."/>
        </authorList>
    </citation>
    <scope>NUCLEOTIDE SEQUENCE [LARGE SCALE GENOMIC DNA]</scope>
    <source>
        <strain>Pei191</strain>
    </source>
</reference>
<gene>
    <name evidence="1" type="primary">secD</name>
    <name type="ordered locus">Emin_0563</name>
</gene>
<feature type="chain" id="PRO_0000412677" description="Protein translocase subunit SecD">
    <location>
        <begin position="1"/>
        <end position="473"/>
    </location>
</feature>
<feature type="transmembrane region" description="Helical" evidence="1">
    <location>
        <begin position="5"/>
        <end position="25"/>
    </location>
</feature>
<feature type="transmembrane region" description="Helical" evidence="1">
    <location>
        <begin position="316"/>
        <end position="336"/>
    </location>
</feature>
<feature type="transmembrane region" description="Helical" evidence="1">
    <location>
        <begin position="337"/>
        <end position="357"/>
    </location>
</feature>
<feature type="transmembrane region" description="Helical" evidence="1">
    <location>
        <begin position="364"/>
        <end position="384"/>
    </location>
</feature>
<feature type="transmembrane region" description="Helical" evidence="1">
    <location>
        <begin position="409"/>
        <end position="429"/>
    </location>
</feature>
<feature type="transmembrane region" description="Helical" evidence="1">
    <location>
        <begin position="436"/>
        <end position="456"/>
    </location>
</feature>
<sequence>MSNKVLVKWAVILVALFASVYLLYPVYKWYSLSNEDRAKLEASGDRPKNILNLGLDLRGGSSLLLELDVTKLPDNTPAARNDAVSRAIEIIRNRIDQYGVAETPITRQGEKWISVQLPGIANPAQAEALIGKTAMLEFRIVKPQTSALDKAAAKIEDTEEPWDEDGNLIPSLAKLLPADTIVLKNKEGGFSFLEKEVKVTGADLENAQVNVGGDYGYPEVSFTFSAEGAKKFGSLTGSNIGKQLAIVLDNTVQSAPSIQSRITRDGRISGRFTMDEARRLAITLRAGALPAPVKIIEKRTIGPSLGEDSIKSGVRASLYGIVIILILMAIYYKSGGIISNIALILNLVFLLAAMAAFNATLTMPGIAGIILSLAMAIDANVLILERMREEKLRGRSLYEMIDLGYTKAWSAIFDSNFTSWIVALFLFQFGSGPVKGFAVTLTLGLLIGVFTSVFVTRAIYDLLLTANPKDISL</sequence>
<comment type="function">
    <text evidence="1">Part of the Sec protein translocase complex. Interacts with the SecYEG preprotein conducting channel. SecDF uses the proton motive force (PMF) to complete protein translocation after the ATP-dependent function of SecA.</text>
</comment>
<comment type="subunit">
    <text evidence="1">Forms a complex with SecF. Part of the essential Sec protein translocation apparatus which comprises SecA, SecYEG and auxiliary proteins SecDF. Other proteins may also be involved.</text>
</comment>
<comment type="subcellular location">
    <subcellularLocation>
        <location evidence="1">Cell inner membrane</location>
        <topology evidence="1">Multi-pass membrane protein</topology>
    </subcellularLocation>
</comment>
<comment type="similarity">
    <text evidence="1">Belongs to the SecD/SecF family. SecD subfamily.</text>
</comment>
<accession>B2KBZ1</accession>
<keyword id="KW-0997">Cell inner membrane</keyword>
<keyword id="KW-1003">Cell membrane</keyword>
<keyword id="KW-0472">Membrane</keyword>
<keyword id="KW-0653">Protein transport</keyword>
<keyword id="KW-1185">Reference proteome</keyword>
<keyword id="KW-0811">Translocation</keyword>
<keyword id="KW-0812">Transmembrane</keyword>
<keyword id="KW-1133">Transmembrane helix</keyword>
<keyword id="KW-0813">Transport</keyword>
<name>SECD_ELUMP</name>
<protein>
    <recommendedName>
        <fullName evidence="1">Protein translocase subunit SecD</fullName>
    </recommendedName>
</protein>